<reference key="1">
    <citation type="submission" date="2006-03" db="EMBL/GenBank/DDBJ databases">
        <title>Complete sequence of Rhodopseudomonas palustris BisB5.</title>
        <authorList>
            <consortium name="US DOE Joint Genome Institute"/>
            <person name="Copeland A."/>
            <person name="Lucas S."/>
            <person name="Lapidus A."/>
            <person name="Barry K."/>
            <person name="Detter J.C."/>
            <person name="Glavina del Rio T."/>
            <person name="Hammon N."/>
            <person name="Israni S."/>
            <person name="Dalin E."/>
            <person name="Tice H."/>
            <person name="Pitluck S."/>
            <person name="Chain P."/>
            <person name="Malfatti S."/>
            <person name="Shin M."/>
            <person name="Vergez L."/>
            <person name="Schmutz J."/>
            <person name="Larimer F."/>
            <person name="Land M."/>
            <person name="Hauser L."/>
            <person name="Pelletier D.A."/>
            <person name="Kyrpides N."/>
            <person name="Lykidis A."/>
            <person name="Oda Y."/>
            <person name="Harwood C.S."/>
            <person name="Richardson P."/>
        </authorList>
    </citation>
    <scope>NUCLEOTIDE SEQUENCE [LARGE SCALE GENOMIC DNA]</scope>
    <source>
        <strain>BisB5</strain>
    </source>
</reference>
<gene>
    <name evidence="1" type="primary">flgI</name>
    <name type="ordered locus">RPD_1677</name>
</gene>
<evidence type="ECO:0000255" key="1">
    <source>
        <dbReference type="HAMAP-Rule" id="MF_00416"/>
    </source>
</evidence>
<dbReference type="EMBL" id="CP000283">
    <property type="protein sequence ID" value="ABE38913.1"/>
    <property type="molecule type" value="Genomic_DNA"/>
</dbReference>
<dbReference type="SMR" id="Q13AH6"/>
<dbReference type="STRING" id="316057.RPD_1677"/>
<dbReference type="KEGG" id="rpd:RPD_1677"/>
<dbReference type="eggNOG" id="COG1706">
    <property type="taxonomic scope" value="Bacteria"/>
</dbReference>
<dbReference type="HOGENOM" id="CLU_045235_1_0_5"/>
<dbReference type="BioCyc" id="RPAL316057:RPD_RS08455-MONOMER"/>
<dbReference type="Proteomes" id="UP000001818">
    <property type="component" value="Chromosome"/>
</dbReference>
<dbReference type="GO" id="GO:0009428">
    <property type="term" value="C:bacterial-type flagellum basal body, distal rod, P ring"/>
    <property type="evidence" value="ECO:0007669"/>
    <property type="project" value="InterPro"/>
</dbReference>
<dbReference type="GO" id="GO:0030288">
    <property type="term" value="C:outer membrane-bounded periplasmic space"/>
    <property type="evidence" value="ECO:0007669"/>
    <property type="project" value="InterPro"/>
</dbReference>
<dbReference type="GO" id="GO:0005198">
    <property type="term" value="F:structural molecule activity"/>
    <property type="evidence" value="ECO:0007669"/>
    <property type="project" value="InterPro"/>
</dbReference>
<dbReference type="GO" id="GO:0071973">
    <property type="term" value="P:bacterial-type flagellum-dependent cell motility"/>
    <property type="evidence" value="ECO:0007669"/>
    <property type="project" value="InterPro"/>
</dbReference>
<dbReference type="HAMAP" id="MF_00416">
    <property type="entry name" value="FlgI"/>
    <property type="match status" value="1"/>
</dbReference>
<dbReference type="InterPro" id="IPR001782">
    <property type="entry name" value="Flag_FlgI"/>
</dbReference>
<dbReference type="NCBIfam" id="NF003676">
    <property type="entry name" value="PRK05303.1"/>
    <property type="match status" value="1"/>
</dbReference>
<dbReference type="PANTHER" id="PTHR30381">
    <property type="entry name" value="FLAGELLAR P-RING PERIPLASMIC PROTEIN FLGI"/>
    <property type="match status" value="1"/>
</dbReference>
<dbReference type="PANTHER" id="PTHR30381:SF0">
    <property type="entry name" value="FLAGELLAR P-RING PROTEIN"/>
    <property type="match status" value="1"/>
</dbReference>
<dbReference type="Pfam" id="PF02119">
    <property type="entry name" value="FlgI"/>
    <property type="match status" value="1"/>
</dbReference>
<dbReference type="PRINTS" id="PR01010">
    <property type="entry name" value="FLGPRINGFLGI"/>
</dbReference>
<accession>Q13AH6</accession>
<sequence length="373" mass="38642">MPSFSPTLLKLAAAALSALLLSGVAASATSRIKDLANIEGVRQNQLIGYGLVVGLNGTGDTLNNIPFTKQSLQAMLERMGVNIRGATIRTGNVAAVMVTGNLPAFATQGTRMDVTVSALGDAKNLQGGTLLVTPLLGADGNVYAVAQGSLAIGGFQAEGEAAKITRGVPTVGRIANGAIIEREIEFALNRLPNVRLALRNADFTTAKRIAAAVNDFLGTKSAEPIDPSTVQLSIPAEFKGNAVAFLTEIEQLQVEPDQAAKIIIDERSGIIVMGRDVRVATVAVAQGNLTVSISESPQVSQPNPLSRGRTTVTPNSRIGVTEDGKKLALVKDGVSLQQLVDGLNGLGIGPRDLIGILQAIKAAGAIEADIEVM</sequence>
<proteinExistence type="inferred from homology"/>
<comment type="function">
    <text evidence="1">Assembles around the rod to form the L-ring and probably protects the motor/basal body from shearing forces during rotation.</text>
</comment>
<comment type="subunit">
    <text evidence="1">The basal body constitutes a major portion of the flagellar organelle and consists of four rings (L,P,S, and M) mounted on a central rod.</text>
</comment>
<comment type="subcellular location">
    <subcellularLocation>
        <location evidence="1">Periplasm</location>
    </subcellularLocation>
    <subcellularLocation>
        <location evidence="1">Bacterial flagellum basal body</location>
    </subcellularLocation>
</comment>
<comment type="similarity">
    <text evidence="1">Belongs to the FlgI family.</text>
</comment>
<feature type="signal peptide" evidence="1">
    <location>
        <begin position="1"/>
        <end position="27"/>
    </location>
</feature>
<feature type="chain" id="PRO_1000050117" description="Flagellar P-ring protein">
    <location>
        <begin position="28"/>
        <end position="373"/>
    </location>
</feature>
<keyword id="KW-0975">Bacterial flagellum</keyword>
<keyword id="KW-0574">Periplasm</keyword>
<keyword id="KW-0732">Signal</keyword>
<organism>
    <name type="scientific">Rhodopseudomonas palustris (strain BisB5)</name>
    <dbReference type="NCBI Taxonomy" id="316057"/>
    <lineage>
        <taxon>Bacteria</taxon>
        <taxon>Pseudomonadati</taxon>
        <taxon>Pseudomonadota</taxon>
        <taxon>Alphaproteobacteria</taxon>
        <taxon>Hyphomicrobiales</taxon>
        <taxon>Nitrobacteraceae</taxon>
        <taxon>Rhodopseudomonas</taxon>
    </lineage>
</organism>
<protein>
    <recommendedName>
        <fullName evidence="1">Flagellar P-ring protein</fullName>
    </recommendedName>
    <alternativeName>
        <fullName evidence="1">Basal body P-ring protein</fullName>
    </alternativeName>
</protein>
<name>FLGI_RHOPS</name>